<name>GCSP_BURM1</name>
<proteinExistence type="inferred from homology"/>
<feature type="chain" id="PRO_1000190210" description="Glycine dehydrogenase (decarboxylating)">
    <location>
        <begin position="1"/>
        <end position="975"/>
    </location>
</feature>
<feature type="modified residue" description="N6-(pyridoxal phosphate)lysine" evidence="1">
    <location>
        <position position="723"/>
    </location>
</feature>
<keyword id="KW-0560">Oxidoreductase</keyword>
<keyword id="KW-0663">Pyridoxal phosphate</keyword>
<keyword id="KW-1185">Reference proteome</keyword>
<sequence>MKLEHPDRLMNRTPLSLAALETHDAFAERHIGPDAASQQAMLDTLGFASRAALIDAVIPASIRRNETLPLGPFSQPKSEAEALAALRALADKNQVFRSYIGQGYYDTHTPAVILRNVLENPAWYTAYTPYQPEISQGRLEALLNFQQMVTDLTGLAISNASLLDEATAAAEAMTLLQRVGKPKSNVFYVADDVLPQTLEVIRTRALPIGIDVKTGPAADAAQSNAFGVLLQYPGVNGDVRDYRALTDAIHAAGGHVVVAADLLALTVLTPPGEWGADVAVGNTQRFGVPMGFGGPHAAYLAVRDEFKRQMPGRLVGVTVDAQGKPALRLALQTREQHIRREKATSNVCTAQALLAIMASMYAVYHGPHGLKTIALRVNRIAALFAAGVKQLGFATVNDTFFDTVTVDTGARTAQVHAFANAKRINLRRVSDARVGVSIDETTTRDDLADLLAVFAQAAGGTAPSVDALDAGLGGEAALPASLVRTSAYLTHHVFNRHHSETEMLRYLRSLSDKDLALDRSMIPLGSCTMKLNATSEMLPVTWPEFGRIHPFAPAEQTVGYREMIDQLEQMLVAATGYAAVSLQPNAGSQGEYAGLLIIHAYHASRGEGHRDVCLIPASAHGTNPASAHMAGMKVVVVACDAQGNVDIADLKAKAEQHSANLAAIMITYPSTHGVFEQNVREICEIVHAHGGQVYVDGANMNAMVGLTAPGQFGGDVSHLNLHKTFCIPHGGGGPGVGPVAVGAHLAKFLPNQRSTGYTRGEDGIGAVSAAPYGSASILPISWMYIAMMGAKNLTAATETAILNANYIAKRLAPHYPVLYSGPGGLVAHECILDLRPIKESSGITVDDVAKRLMDYGFHAPTMSFPVPGTLMVEPTESESKEELDRFIDAMIAIRDEIRAVEEGRADREDNPLRHAPHTAAVVTANEWPHAYSREQAAYPVASLGTNKYWPPVGRADNAYGDRNLFCACVPMSDYA</sequence>
<gene>
    <name evidence="1" type="primary">gcvP</name>
    <name type="ordered locus">Bmul_0141</name>
    <name type="ordered locus">BMULJ_03124</name>
</gene>
<evidence type="ECO:0000255" key="1">
    <source>
        <dbReference type="HAMAP-Rule" id="MF_00711"/>
    </source>
</evidence>
<dbReference type="EC" id="1.4.4.2" evidence="1"/>
<dbReference type="EMBL" id="CP000868">
    <property type="protein sequence ID" value="ABX13836.1"/>
    <property type="molecule type" value="Genomic_DNA"/>
</dbReference>
<dbReference type="EMBL" id="AP009385">
    <property type="protein sequence ID" value="BAG44998.1"/>
    <property type="molecule type" value="Genomic_DNA"/>
</dbReference>
<dbReference type="RefSeq" id="WP_012212498.1">
    <property type="nucleotide sequence ID" value="NC_010084.1"/>
</dbReference>
<dbReference type="SMR" id="A9ACU3"/>
<dbReference type="STRING" id="395019.BMULJ_03124"/>
<dbReference type="KEGG" id="bmj:BMULJ_03124"/>
<dbReference type="KEGG" id="bmu:Bmul_0141"/>
<dbReference type="eggNOG" id="COG0403">
    <property type="taxonomic scope" value="Bacteria"/>
</dbReference>
<dbReference type="eggNOG" id="COG1003">
    <property type="taxonomic scope" value="Bacteria"/>
</dbReference>
<dbReference type="HOGENOM" id="CLU_004620_1_1_4"/>
<dbReference type="Proteomes" id="UP000008815">
    <property type="component" value="Chromosome 1"/>
</dbReference>
<dbReference type="GO" id="GO:0005829">
    <property type="term" value="C:cytosol"/>
    <property type="evidence" value="ECO:0007669"/>
    <property type="project" value="TreeGrafter"/>
</dbReference>
<dbReference type="GO" id="GO:0005960">
    <property type="term" value="C:glycine cleavage complex"/>
    <property type="evidence" value="ECO:0007669"/>
    <property type="project" value="TreeGrafter"/>
</dbReference>
<dbReference type="GO" id="GO:0016594">
    <property type="term" value="F:glycine binding"/>
    <property type="evidence" value="ECO:0007669"/>
    <property type="project" value="TreeGrafter"/>
</dbReference>
<dbReference type="GO" id="GO:0004375">
    <property type="term" value="F:glycine dehydrogenase (decarboxylating) activity"/>
    <property type="evidence" value="ECO:0007669"/>
    <property type="project" value="UniProtKB-EC"/>
</dbReference>
<dbReference type="GO" id="GO:0030170">
    <property type="term" value="F:pyridoxal phosphate binding"/>
    <property type="evidence" value="ECO:0007669"/>
    <property type="project" value="TreeGrafter"/>
</dbReference>
<dbReference type="GO" id="GO:0019464">
    <property type="term" value="P:glycine decarboxylation via glycine cleavage system"/>
    <property type="evidence" value="ECO:0007669"/>
    <property type="project" value="UniProtKB-UniRule"/>
</dbReference>
<dbReference type="CDD" id="cd00613">
    <property type="entry name" value="GDC-P"/>
    <property type="match status" value="2"/>
</dbReference>
<dbReference type="FunFam" id="3.40.640.10:FF:000005">
    <property type="entry name" value="Glycine dehydrogenase (decarboxylating), mitochondrial"/>
    <property type="match status" value="1"/>
</dbReference>
<dbReference type="FunFam" id="3.90.1150.10:FF:000007">
    <property type="entry name" value="Glycine dehydrogenase (decarboxylating), mitochondrial"/>
    <property type="match status" value="1"/>
</dbReference>
<dbReference type="FunFam" id="3.40.640.10:FF:000007">
    <property type="entry name" value="glycine dehydrogenase (Decarboxylating), mitochondrial"/>
    <property type="match status" value="1"/>
</dbReference>
<dbReference type="Gene3D" id="3.90.1150.10">
    <property type="entry name" value="Aspartate Aminotransferase, domain 1"/>
    <property type="match status" value="2"/>
</dbReference>
<dbReference type="Gene3D" id="3.40.640.10">
    <property type="entry name" value="Type I PLP-dependent aspartate aminotransferase-like (Major domain)"/>
    <property type="match status" value="2"/>
</dbReference>
<dbReference type="HAMAP" id="MF_00711">
    <property type="entry name" value="GcvP"/>
    <property type="match status" value="1"/>
</dbReference>
<dbReference type="InterPro" id="IPR003437">
    <property type="entry name" value="GcvP"/>
</dbReference>
<dbReference type="InterPro" id="IPR049316">
    <property type="entry name" value="GDC-P_C"/>
</dbReference>
<dbReference type="InterPro" id="IPR049315">
    <property type="entry name" value="GDC-P_N"/>
</dbReference>
<dbReference type="InterPro" id="IPR020581">
    <property type="entry name" value="GDC_P"/>
</dbReference>
<dbReference type="InterPro" id="IPR015424">
    <property type="entry name" value="PyrdxlP-dep_Trfase"/>
</dbReference>
<dbReference type="InterPro" id="IPR015421">
    <property type="entry name" value="PyrdxlP-dep_Trfase_major"/>
</dbReference>
<dbReference type="InterPro" id="IPR015422">
    <property type="entry name" value="PyrdxlP-dep_Trfase_small"/>
</dbReference>
<dbReference type="NCBIfam" id="TIGR00461">
    <property type="entry name" value="gcvP"/>
    <property type="match status" value="1"/>
</dbReference>
<dbReference type="NCBIfam" id="NF003346">
    <property type="entry name" value="PRK04366.1"/>
    <property type="match status" value="1"/>
</dbReference>
<dbReference type="PANTHER" id="PTHR11773:SF1">
    <property type="entry name" value="GLYCINE DEHYDROGENASE (DECARBOXYLATING), MITOCHONDRIAL"/>
    <property type="match status" value="1"/>
</dbReference>
<dbReference type="PANTHER" id="PTHR11773">
    <property type="entry name" value="GLYCINE DEHYDROGENASE, DECARBOXYLATING"/>
    <property type="match status" value="1"/>
</dbReference>
<dbReference type="Pfam" id="PF21478">
    <property type="entry name" value="GcvP2_C"/>
    <property type="match status" value="1"/>
</dbReference>
<dbReference type="Pfam" id="PF02347">
    <property type="entry name" value="GDC-P"/>
    <property type="match status" value="2"/>
</dbReference>
<dbReference type="SUPFAM" id="SSF53383">
    <property type="entry name" value="PLP-dependent transferases"/>
    <property type="match status" value="2"/>
</dbReference>
<comment type="function">
    <text evidence="1">The glycine cleavage system catalyzes the degradation of glycine. The P protein binds the alpha-amino group of glycine through its pyridoxal phosphate cofactor; CO(2) is released and the remaining methylamine moiety is then transferred to the lipoamide cofactor of the H protein.</text>
</comment>
<comment type="catalytic activity">
    <reaction evidence="1">
        <text>N(6)-[(R)-lipoyl]-L-lysyl-[glycine-cleavage complex H protein] + glycine + H(+) = N(6)-[(R)-S(8)-aminomethyldihydrolipoyl]-L-lysyl-[glycine-cleavage complex H protein] + CO2</text>
        <dbReference type="Rhea" id="RHEA:24304"/>
        <dbReference type="Rhea" id="RHEA-COMP:10494"/>
        <dbReference type="Rhea" id="RHEA-COMP:10495"/>
        <dbReference type="ChEBI" id="CHEBI:15378"/>
        <dbReference type="ChEBI" id="CHEBI:16526"/>
        <dbReference type="ChEBI" id="CHEBI:57305"/>
        <dbReference type="ChEBI" id="CHEBI:83099"/>
        <dbReference type="ChEBI" id="CHEBI:83143"/>
        <dbReference type="EC" id="1.4.4.2"/>
    </reaction>
</comment>
<comment type="cofactor">
    <cofactor evidence="1">
        <name>pyridoxal 5'-phosphate</name>
        <dbReference type="ChEBI" id="CHEBI:597326"/>
    </cofactor>
</comment>
<comment type="subunit">
    <text evidence="1">The glycine cleavage system is composed of four proteins: P, T, L and H.</text>
</comment>
<comment type="similarity">
    <text evidence="1">Belongs to the GcvP family.</text>
</comment>
<reference key="1">
    <citation type="submission" date="2007-10" db="EMBL/GenBank/DDBJ databases">
        <title>Complete sequence of chromosome 1 of Burkholderia multivorans ATCC 17616.</title>
        <authorList>
            <person name="Copeland A."/>
            <person name="Lucas S."/>
            <person name="Lapidus A."/>
            <person name="Barry K."/>
            <person name="Glavina del Rio T."/>
            <person name="Dalin E."/>
            <person name="Tice H."/>
            <person name="Pitluck S."/>
            <person name="Chain P."/>
            <person name="Malfatti S."/>
            <person name="Shin M."/>
            <person name="Vergez L."/>
            <person name="Schmutz J."/>
            <person name="Larimer F."/>
            <person name="Land M."/>
            <person name="Hauser L."/>
            <person name="Kyrpides N."/>
            <person name="Kim E."/>
            <person name="Tiedje J."/>
            <person name="Richardson P."/>
        </authorList>
    </citation>
    <scope>NUCLEOTIDE SEQUENCE [LARGE SCALE GENOMIC DNA]</scope>
    <source>
        <strain>ATCC 17616 / 249</strain>
    </source>
</reference>
<reference key="2">
    <citation type="submission" date="2007-04" db="EMBL/GenBank/DDBJ databases">
        <title>Complete genome sequence of Burkholderia multivorans ATCC 17616.</title>
        <authorList>
            <person name="Ohtsubo Y."/>
            <person name="Yamashita A."/>
            <person name="Kurokawa K."/>
            <person name="Takami H."/>
            <person name="Yuhara S."/>
            <person name="Nishiyama E."/>
            <person name="Endo R."/>
            <person name="Miyazaki R."/>
            <person name="Ono A."/>
            <person name="Yano K."/>
            <person name="Ito M."/>
            <person name="Sota M."/>
            <person name="Yuji N."/>
            <person name="Hattori M."/>
            <person name="Tsuda M."/>
        </authorList>
    </citation>
    <scope>NUCLEOTIDE SEQUENCE [LARGE SCALE GENOMIC DNA]</scope>
    <source>
        <strain>ATCC 17616 / 249</strain>
    </source>
</reference>
<accession>A9ACU3</accession>
<organism>
    <name type="scientific">Burkholderia multivorans (strain ATCC 17616 / 249)</name>
    <dbReference type="NCBI Taxonomy" id="395019"/>
    <lineage>
        <taxon>Bacteria</taxon>
        <taxon>Pseudomonadati</taxon>
        <taxon>Pseudomonadota</taxon>
        <taxon>Betaproteobacteria</taxon>
        <taxon>Burkholderiales</taxon>
        <taxon>Burkholderiaceae</taxon>
        <taxon>Burkholderia</taxon>
        <taxon>Burkholderia cepacia complex</taxon>
    </lineage>
</organism>
<protein>
    <recommendedName>
        <fullName evidence="1">Glycine dehydrogenase (decarboxylating)</fullName>
        <ecNumber evidence="1">1.4.4.2</ecNumber>
    </recommendedName>
    <alternativeName>
        <fullName evidence="1">Glycine cleavage system P-protein</fullName>
    </alternativeName>
    <alternativeName>
        <fullName evidence="1">Glycine decarboxylase</fullName>
    </alternativeName>
    <alternativeName>
        <fullName evidence="1">Glycine dehydrogenase (aminomethyl-transferring)</fullName>
    </alternativeName>
</protein>